<sequence length="125" mass="13868">MQWQGRSVRKPSGGRYHTSQGKKRTEIGRAPAETHIGEERRRIVRTFGGNQKVRALRLEYATVSNPATGETKKTKIEAVEANSADPNYVRRKLLTKGAIIKTEMGRARIVSRPSQDGVVNAVLLA</sequence>
<protein>
    <recommendedName>
        <fullName evidence="1">Small ribosomal subunit protein eS8</fullName>
    </recommendedName>
    <alternativeName>
        <fullName evidence="3">30S ribosomal protein S8e</fullName>
    </alternativeName>
</protein>
<proteinExistence type="inferred from homology"/>
<evidence type="ECO:0000255" key="1">
    <source>
        <dbReference type="HAMAP-Rule" id="MF_00029"/>
    </source>
</evidence>
<evidence type="ECO:0000256" key="2">
    <source>
        <dbReference type="SAM" id="MobiDB-lite"/>
    </source>
</evidence>
<evidence type="ECO:0000305" key="3"/>
<dbReference type="EMBL" id="CP000562">
    <property type="protein sequence ID" value="ABN56402.1"/>
    <property type="molecule type" value="Genomic_DNA"/>
</dbReference>
<dbReference type="RefSeq" id="WP_011843312.1">
    <property type="nucleotide sequence ID" value="NC_009051.1"/>
</dbReference>
<dbReference type="SMR" id="A3CSQ2"/>
<dbReference type="STRING" id="368407.Memar_0469"/>
<dbReference type="GeneID" id="4846051"/>
<dbReference type="KEGG" id="mem:Memar_0469"/>
<dbReference type="eggNOG" id="arCOG04154">
    <property type="taxonomic scope" value="Archaea"/>
</dbReference>
<dbReference type="HOGENOM" id="CLU_080597_2_1_2"/>
<dbReference type="OrthoDB" id="372305at2157"/>
<dbReference type="Proteomes" id="UP000002146">
    <property type="component" value="Chromosome"/>
</dbReference>
<dbReference type="GO" id="GO:1990904">
    <property type="term" value="C:ribonucleoprotein complex"/>
    <property type="evidence" value="ECO:0007669"/>
    <property type="project" value="UniProtKB-KW"/>
</dbReference>
<dbReference type="GO" id="GO:0005840">
    <property type="term" value="C:ribosome"/>
    <property type="evidence" value="ECO:0007669"/>
    <property type="project" value="UniProtKB-KW"/>
</dbReference>
<dbReference type="GO" id="GO:0003735">
    <property type="term" value="F:structural constituent of ribosome"/>
    <property type="evidence" value="ECO:0007669"/>
    <property type="project" value="InterPro"/>
</dbReference>
<dbReference type="GO" id="GO:0006412">
    <property type="term" value="P:translation"/>
    <property type="evidence" value="ECO:0007669"/>
    <property type="project" value="UniProtKB-UniRule"/>
</dbReference>
<dbReference type="CDD" id="cd11382">
    <property type="entry name" value="Ribosomal_S8e"/>
    <property type="match status" value="1"/>
</dbReference>
<dbReference type="Gene3D" id="3.10.290.70">
    <property type="match status" value="1"/>
</dbReference>
<dbReference type="HAMAP" id="MF_00029">
    <property type="entry name" value="Ribosomal_eS8"/>
    <property type="match status" value="1"/>
</dbReference>
<dbReference type="InterPro" id="IPR001047">
    <property type="entry name" value="Ribosomal_eS8"/>
</dbReference>
<dbReference type="InterPro" id="IPR020919">
    <property type="entry name" value="Ribosomal_protein_eS8_arc"/>
</dbReference>
<dbReference type="InterPro" id="IPR022309">
    <property type="entry name" value="Ribosomal_Se8/biogenesis_NSA2"/>
</dbReference>
<dbReference type="NCBIfam" id="TIGR00307">
    <property type="entry name" value="eS8"/>
    <property type="match status" value="1"/>
</dbReference>
<dbReference type="PANTHER" id="PTHR10394">
    <property type="entry name" value="40S RIBOSOMAL PROTEIN S8"/>
    <property type="match status" value="1"/>
</dbReference>
<dbReference type="Pfam" id="PF01201">
    <property type="entry name" value="Ribosomal_S8e"/>
    <property type="match status" value="1"/>
</dbReference>
<name>RS8E_METMJ</name>
<feature type="chain" id="PRO_0000304172" description="Small ribosomal subunit protein eS8">
    <location>
        <begin position="1"/>
        <end position="125"/>
    </location>
</feature>
<feature type="region of interest" description="Disordered" evidence="2">
    <location>
        <begin position="1"/>
        <end position="35"/>
    </location>
</feature>
<accession>A3CSQ2</accession>
<comment type="subunit">
    <text evidence="1">Part of the 30S ribosomal subunit.</text>
</comment>
<comment type="similarity">
    <text evidence="1">Belongs to the eukaryotic ribosomal protein eS8 family.</text>
</comment>
<keyword id="KW-0687">Ribonucleoprotein</keyword>
<keyword id="KW-0689">Ribosomal protein</keyword>
<reference key="1">
    <citation type="journal article" date="2009" name="Stand. Genomic Sci.">
        <title>Complete genome sequence of Methanoculleus marisnigri Romesser et al. 1981 type strain JR1.</title>
        <authorList>
            <person name="Anderson I.J."/>
            <person name="Sieprawska-Lupa M."/>
            <person name="Lapidus A."/>
            <person name="Nolan M."/>
            <person name="Copeland A."/>
            <person name="Glavina Del Rio T."/>
            <person name="Tice H."/>
            <person name="Dalin E."/>
            <person name="Barry K."/>
            <person name="Saunders E."/>
            <person name="Han C."/>
            <person name="Brettin T."/>
            <person name="Detter J.C."/>
            <person name="Bruce D."/>
            <person name="Mikhailova N."/>
            <person name="Pitluck S."/>
            <person name="Hauser L."/>
            <person name="Land M."/>
            <person name="Lucas S."/>
            <person name="Richardson P."/>
            <person name="Whitman W.B."/>
            <person name="Kyrpides N.C."/>
        </authorList>
    </citation>
    <scope>NUCLEOTIDE SEQUENCE [LARGE SCALE GENOMIC DNA]</scope>
    <source>
        <strain>ATCC 35101 / DSM 1498 / JR1</strain>
    </source>
</reference>
<organism>
    <name type="scientific">Methanoculleus marisnigri (strain ATCC 35101 / DSM 1498 / JR1)</name>
    <dbReference type="NCBI Taxonomy" id="368407"/>
    <lineage>
        <taxon>Archaea</taxon>
        <taxon>Methanobacteriati</taxon>
        <taxon>Methanobacteriota</taxon>
        <taxon>Stenosarchaea group</taxon>
        <taxon>Methanomicrobia</taxon>
        <taxon>Methanomicrobiales</taxon>
        <taxon>Methanomicrobiaceae</taxon>
        <taxon>Methanoculleus</taxon>
    </lineage>
</organism>
<gene>
    <name evidence="1" type="primary">rps8e</name>
    <name type="ordered locus">Memar_0469</name>
</gene>